<sequence>MTTEIMNELKSKMEKSIESLQRDFAAIRAGHANANLLDRVSVVYYGAETPVQQLAGISVPEPRMLLVTPYDKTSIDDILKAINMANLGVNPTSDGNVIRITVPALTEERRKELVKEAKKEAENSKIAIRNIRRDANDALKKAEKAGDITEDDLKSFSDDVQAETDKFIKKIDELTASKEKDILEV</sequence>
<gene>
    <name evidence="1" type="primary">frr</name>
    <name type="ordered locus">MCCL_0843</name>
</gene>
<accession>B9EBD9</accession>
<comment type="function">
    <text evidence="1">Responsible for the release of ribosomes from messenger RNA at the termination of protein biosynthesis. May increase the efficiency of translation by recycling ribosomes from one round of translation to another.</text>
</comment>
<comment type="subcellular location">
    <subcellularLocation>
        <location evidence="1">Cytoplasm</location>
    </subcellularLocation>
</comment>
<comment type="similarity">
    <text evidence="1">Belongs to the RRF family.</text>
</comment>
<dbReference type="EMBL" id="AP009484">
    <property type="protein sequence ID" value="BAH17550.1"/>
    <property type="molecule type" value="Genomic_DNA"/>
</dbReference>
<dbReference type="RefSeq" id="WP_012656750.1">
    <property type="nucleotide sequence ID" value="NC_011999.1"/>
</dbReference>
<dbReference type="SMR" id="B9EBD9"/>
<dbReference type="STRING" id="458233.MCCL_0843"/>
<dbReference type="KEGG" id="mcl:MCCL_0843"/>
<dbReference type="eggNOG" id="COG0233">
    <property type="taxonomic scope" value="Bacteria"/>
</dbReference>
<dbReference type="HOGENOM" id="CLU_073981_2_0_9"/>
<dbReference type="OrthoDB" id="9804006at2"/>
<dbReference type="Proteomes" id="UP000001383">
    <property type="component" value="Chromosome"/>
</dbReference>
<dbReference type="GO" id="GO:0005737">
    <property type="term" value="C:cytoplasm"/>
    <property type="evidence" value="ECO:0007669"/>
    <property type="project" value="UniProtKB-SubCell"/>
</dbReference>
<dbReference type="GO" id="GO:0043023">
    <property type="term" value="F:ribosomal large subunit binding"/>
    <property type="evidence" value="ECO:0007669"/>
    <property type="project" value="TreeGrafter"/>
</dbReference>
<dbReference type="GO" id="GO:0006415">
    <property type="term" value="P:translational termination"/>
    <property type="evidence" value="ECO:0007669"/>
    <property type="project" value="UniProtKB-UniRule"/>
</dbReference>
<dbReference type="CDD" id="cd00520">
    <property type="entry name" value="RRF"/>
    <property type="match status" value="1"/>
</dbReference>
<dbReference type="FunFam" id="1.10.132.20:FF:000001">
    <property type="entry name" value="Ribosome-recycling factor"/>
    <property type="match status" value="1"/>
</dbReference>
<dbReference type="FunFam" id="3.30.1360.40:FF:000001">
    <property type="entry name" value="Ribosome-recycling factor"/>
    <property type="match status" value="1"/>
</dbReference>
<dbReference type="Gene3D" id="3.30.1360.40">
    <property type="match status" value="1"/>
</dbReference>
<dbReference type="Gene3D" id="1.10.132.20">
    <property type="entry name" value="Ribosome-recycling factor"/>
    <property type="match status" value="1"/>
</dbReference>
<dbReference type="HAMAP" id="MF_00040">
    <property type="entry name" value="RRF"/>
    <property type="match status" value="1"/>
</dbReference>
<dbReference type="InterPro" id="IPR002661">
    <property type="entry name" value="Ribosome_recyc_fac"/>
</dbReference>
<dbReference type="InterPro" id="IPR023584">
    <property type="entry name" value="Ribosome_recyc_fac_dom"/>
</dbReference>
<dbReference type="InterPro" id="IPR036191">
    <property type="entry name" value="RRF_sf"/>
</dbReference>
<dbReference type="NCBIfam" id="TIGR00496">
    <property type="entry name" value="frr"/>
    <property type="match status" value="1"/>
</dbReference>
<dbReference type="PANTHER" id="PTHR20982:SF3">
    <property type="entry name" value="MITOCHONDRIAL RIBOSOME RECYCLING FACTOR PSEUDO 1"/>
    <property type="match status" value="1"/>
</dbReference>
<dbReference type="PANTHER" id="PTHR20982">
    <property type="entry name" value="RIBOSOME RECYCLING FACTOR"/>
    <property type="match status" value="1"/>
</dbReference>
<dbReference type="Pfam" id="PF01765">
    <property type="entry name" value="RRF"/>
    <property type="match status" value="1"/>
</dbReference>
<dbReference type="SUPFAM" id="SSF55194">
    <property type="entry name" value="Ribosome recycling factor, RRF"/>
    <property type="match status" value="1"/>
</dbReference>
<keyword id="KW-0963">Cytoplasm</keyword>
<keyword id="KW-0648">Protein biosynthesis</keyword>
<keyword id="KW-1185">Reference proteome</keyword>
<reference key="1">
    <citation type="journal article" date="2009" name="J. Bacteriol.">
        <title>Complete genome sequence of Macrococcus caseolyticus strain JCSCS5402, reflecting the ancestral genome of the human-pathogenic staphylococci.</title>
        <authorList>
            <person name="Baba T."/>
            <person name="Kuwahara-Arai K."/>
            <person name="Uchiyama I."/>
            <person name="Takeuchi F."/>
            <person name="Ito T."/>
            <person name="Hiramatsu K."/>
        </authorList>
    </citation>
    <scope>NUCLEOTIDE SEQUENCE [LARGE SCALE GENOMIC DNA]</scope>
    <source>
        <strain>JCSC5402</strain>
    </source>
</reference>
<evidence type="ECO:0000255" key="1">
    <source>
        <dbReference type="HAMAP-Rule" id="MF_00040"/>
    </source>
</evidence>
<protein>
    <recommendedName>
        <fullName evidence="1">Ribosome-recycling factor</fullName>
        <shortName evidence="1">RRF</shortName>
    </recommendedName>
    <alternativeName>
        <fullName evidence="1">Ribosome-releasing factor</fullName>
    </alternativeName>
</protein>
<feature type="chain" id="PRO_1000194937" description="Ribosome-recycling factor">
    <location>
        <begin position="1"/>
        <end position="185"/>
    </location>
</feature>
<name>RRF_MACCJ</name>
<organism>
    <name type="scientific">Macrococcus caseolyticus (strain JCSC5402)</name>
    <name type="common">Macrococcoides caseolyticum</name>
    <dbReference type="NCBI Taxonomy" id="458233"/>
    <lineage>
        <taxon>Bacteria</taxon>
        <taxon>Bacillati</taxon>
        <taxon>Bacillota</taxon>
        <taxon>Bacilli</taxon>
        <taxon>Bacillales</taxon>
        <taxon>Staphylococcaceae</taxon>
        <taxon>Macrococcoides</taxon>
    </lineage>
</organism>
<proteinExistence type="inferred from homology"/>